<keyword id="KW-0002">3D-structure</keyword>
<keyword id="KW-0903">Direct protein sequencing</keyword>
<keyword id="KW-0597">Phosphoprotein</keyword>
<keyword id="KW-0687">Ribonucleoprotein</keyword>
<keyword id="KW-0689">Ribosomal protein</keyword>
<keyword id="KW-0694">RNA-binding</keyword>
<keyword id="KW-0699">rRNA-binding</keyword>
<organism>
    <name type="scientific">Geobacillus stearothermophilus</name>
    <name type="common">Bacillus stearothermophilus</name>
    <dbReference type="NCBI Taxonomy" id="1422"/>
    <lineage>
        <taxon>Bacteria</taxon>
        <taxon>Bacillati</taxon>
        <taxon>Bacillota</taxon>
        <taxon>Bacilli</taxon>
        <taxon>Bacillales</taxon>
        <taxon>Anoxybacillaceae</taxon>
        <taxon>Geobacillus</taxon>
    </lineage>
</organism>
<dbReference type="EMBL" id="M57624">
    <property type="protein sequence ID" value="AAA22702.1"/>
    <property type="status" value="ALT_SEQ"/>
    <property type="molecule type" value="Genomic_DNA"/>
</dbReference>
<dbReference type="PIR" id="B29102">
    <property type="entry name" value="R5BS8F"/>
</dbReference>
<dbReference type="RefSeq" id="WP_033008681.1">
    <property type="nucleotide sequence ID" value="NZ_RCTK01000011.1"/>
</dbReference>
<dbReference type="PDB" id="1OVY">
    <property type="method" value="NMR"/>
    <property type="chains" value="A=1-120"/>
</dbReference>
<dbReference type="PDBsum" id="1OVY"/>
<dbReference type="BMRB" id="P09415"/>
<dbReference type="SMR" id="P09415"/>
<dbReference type="GeneID" id="89612884"/>
<dbReference type="OrthoDB" id="9810939at2"/>
<dbReference type="EvolutionaryTrace" id="P09415"/>
<dbReference type="GO" id="GO:0022625">
    <property type="term" value="C:cytosolic large ribosomal subunit"/>
    <property type="evidence" value="ECO:0007669"/>
    <property type="project" value="TreeGrafter"/>
</dbReference>
<dbReference type="GO" id="GO:0008097">
    <property type="term" value="F:5S rRNA binding"/>
    <property type="evidence" value="ECO:0007669"/>
    <property type="project" value="TreeGrafter"/>
</dbReference>
<dbReference type="GO" id="GO:0003735">
    <property type="term" value="F:structural constituent of ribosome"/>
    <property type="evidence" value="ECO:0007669"/>
    <property type="project" value="InterPro"/>
</dbReference>
<dbReference type="GO" id="GO:0006412">
    <property type="term" value="P:translation"/>
    <property type="evidence" value="ECO:0007669"/>
    <property type="project" value="UniProtKB-UniRule"/>
</dbReference>
<dbReference type="CDD" id="cd00432">
    <property type="entry name" value="Ribosomal_L18_L5e"/>
    <property type="match status" value="1"/>
</dbReference>
<dbReference type="DisProt" id="DP00966"/>
<dbReference type="FunFam" id="3.30.420.100:FF:000001">
    <property type="entry name" value="50S ribosomal protein L18"/>
    <property type="match status" value="1"/>
</dbReference>
<dbReference type="Gene3D" id="3.30.420.100">
    <property type="match status" value="1"/>
</dbReference>
<dbReference type="HAMAP" id="MF_01337_B">
    <property type="entry name" value="Ribosomal_uL18_B"/>
    <property type="match status" value="1"/>
</dbReference>
<dbReference type="InterPro" id="IPR004389">
    <property type="entry name" value="Ribosomal_uL18_bac-type"/>
</dbReference>
<dbReference type="InterPro" id="IPR005484">
    <property type="entry name" value="Ribosomal_uL18_bac/euk"/>
</dbReference>
<dbReference type="NCBIfam" id="TIGR00060">
    <property type="entry name" value="L18_bact"/>
    <property type="match status" value="1"/>
</dbReference>
<dbReference type="PANTHER" id="PTHR12899">
    <property type="entry name" value="39S RIBOSOMAL PROTEIN L18, MITOCHONDRIAL"/>
    <property type="match status" value="1"/>
</dbReference>
<dbReference type="PANTHER" id="PTHR12899:SF3">
    <property type="entry name" value="LARGE RIBOSOMAL SUBUNIT PROTEIN UL18M"/>
    <property type="match status" value="1"/>
</dbReference>
<dbReference type="Pfam" id="PF00861">
    <property type="entry name" value="Ribosomal_L18p"/>
    <property type="match status" value="1"/>
</dbReference>
<dbReference type="SUPFAM" id="SSF53137">
    <property type="entry name" value="Translational machinery components"/>
    <property type="match status" value="1"/>
</dbReference>
<accession>P09415</accession>
<gene>
    <name type="primary">rplR</name>
</gene>
<proteinExistence type="evidence at protein level"/>
<protein>
    <recommendedName>
        <fullName evidence="2">Large ribosomal subunit protein uL18</fullName>
    </recommendedName>
    <alternativeName>
        <fullName>50S ribosomal protein L18</fullName>
    </alternativeName>
    <alternativeName>
        <fullName>BL22</fullName>
    </alternativeName>
</protein>
<feature type="chain" id="PRO_0000131215" description="Large ribosomal subunit protein uL18">
    <location>
        <begin position="1"/>
        <end position="120"/>
    </location>
</feature>
<feature type="strand" evidence="3">
    <location>
        <begin position="30"/>
        <end position="36"/>
    </location>
</feature>
<feature type="strand" evidence="3">
    <location>
        <begin position="39"/>
        <end position="45"/>
    </location>
</feature>
<feature type="strand" evidence="3">
    <location>
        <begin position="53"/>
        <end position="57"/>
    </location>
</feature>
<feature type="turn" evidence="3">
    <location>
        <begin position="61"/>
        <end position="63"/>
    </location>
</feature>
<feature type="helix" evidence="3">
    <location>
        <begin position="71"/>
        <end position="88"/>
    </location>
</feature>
<feature type="strand" evidence="3">
    <location>
        <begin position="89"/>
        <end position="91"/>
    </location>
</feature>
<feature type="helix" evidence="3">
    <location>
        <begin position="107"/>
        <end position="117"/>
    </location>
</feature>
<reference key="1">
    <citation type="journal article" date="1987" name="FEBS Lett.">
        <title>The complete amino acid sequences of the 5 S rRNA binding proteins L5 and L18 from the moderate thermophile Bacillus stearothermophilus ribosome.</title>
        <authorList>
            <person name="Kimura J."/>
            <person name="Kimura M."/>
        </authorList>
    </citation>
    <scope>PROTEIN SEQUENCE</scope>
    <source>
        <strain>ATCC 29609 / DSM 2027 / NCA 1503 / NCIMB 8924</strain>
    </source>
</reference>
<reference key="2">
    <citation type="journal article" date="1991" name="J. Biol. Chem.">
        <title>Cloning, sequencing, and overexpression of genes for ribosomal proteins from Bacillus stearothermophilus.</title>
        <authorList>
            <person name="Ramakrishnan V."/>
            <person name="Gerchman S.E."/>
        </authorList>
    </citation>
    <scope>NUCLEOTIDE SEQUENCE [GENOMIC DNA]</scope>
</reference>
<reference key="3">
    <citation type="journal article" date="1972" name="Mol. Gen. Genet.">
        <title>Isolation and characterization of 5S RNA-protein complexes from Bacillus stearothermophilus and Escherichia coli ribosomes.</title>
        <authorList>
            <person name="Horne J.R."/>
            <person name="Erdmann V.A."/>
        </authorList>
    </citation>
    <scope>ISOLATION OF 5S RRNA-PROTEIN COMPLEXES</scope>
</reference>
<reference key="4">
    <citation type="journal article" date="1999" name="Biochemistry">
        <title>Phosphorylation of ribosomal protein L18 is required for its folding and binding to 5S rRNA.</title>
        <authorList>
            <person name="Bloemink M.J."/>
            <person name="Moore P.B."/>
        </authorList>
    </citation>
    <scope>PHOSPHORYLATION</scope>
</reference>
<reference key="5">
    <citation type="journal article" date="2004" name="J. Mol. Biol.">
        <title>The solution structure of ribosomal protein L18 from Bacillus stearothermophilus.</title>
        <authorList>
            <person name="Turner C.F."/>
            <person name="Moore P.B."/>
        </authorList>
    </citation>
    <scope>STRUCTURE BY NMR</scope>
</reference>
<comment type="function">
    <text>This is one of the proteins that bind and probably mediate the attachment of the 5S RNA into the large ribosomal subunit, where it forms part of the central protuberance.</text>
</comment>
<comment type="subunit">
    <text>Part of the 50S ribosomal subunit; part of the 5S rRNA/L5/L18 subcomplex. In B.stearothermophilus only 2 proteins, L5 and L18 have been shown to be part of this subcomplex, unlike the case in E.coli and T.thermophilus where L25 (TL5) is also found.</text>
</comment>
<comment type="PTM">
    <text evidence="1">The protein, when overexpressed in E.coli, contains a phosphoserine, which is required for the protein to bind to 5S rRNA (PubMed:10529214). It has been suggested, based solely on amino acid conservation, that this occurs on Ser-57.</text>
</comment>
<comment type="similarity">
    <text evidence="2">Belongs to the universal ribosomal protein uL18 family.</text>
</comment>
<evidence type="ECO:0000269" key="1">
    <source>
    </source>
</evidence>
<evidence type="ECO:0000305" key="2"/>
<evidence type="ECO:0007829" key="3">
    <source>
        <dbReference type="PDB" id="1OVY"/>
    </source>
</evidence>
<sequence>MITKVDRNAVRKKRHARIRKKIFGTTERPRLSVFRSNKHIYAQIIDDTKSATIVSASTLDKEFGLDSTNNIEAAKKVGELVAKRALEKGIKQVVFDRGGYLYHGRVKALADAAREAGLEF</sequence>
<name>RL18_GEOSE</name>